<name>FOLD_LAWIP</name>
<accession>Q1MPZ8</accession>
<organism>
    <name type="scientific">Lawsonia intracellularis (strain PHE/MN1-00)</name>
    <dbReference type="NCBI Taxonomy" id="363253"/>
    <lineage>
        <taxon>Bacteria</taxon>
        <taxon>Pseudomonadati</taxon>
        <taxon>Thermodesulfobacteriota</taxon>
        <taxon>Desulfovibrionia</taxon>
        <taxon>Desulfovibrionales</taxon>
        <taxon>Desulfovibrionaceae</taxon>
        <taxon>Lawsonia</taxon>
    </lineage>
</organism>
<protein>
    <recommendedName>
        <fullName evidence="1">Bifunctional protein FolD</fullName>
    </recommendedName>
    <domain>
        <recommendedName>
            <fullName evidence="1">Methylenetetrahydrofolate dehydrogenase</fullName>
            <ecNumber evidence="1">1.5.1.5</ecNumber>
        </recommendedName>
    </domain>
    <domain>
        <recommendedName>
            <fullName evidence="1">Methenyltetrahydrofolate cyclohydrolase</fullName>
            <ecNumber evidence="1">3.5.4.9</ecNumber>
        </recommendedName>
    </domain>
</protein>
<sequence length="297" mass="31901">MAADIINGMEIRESILEELRGEVANLKRDYNVVPGLVTILVGNHPASLSYVTLKIKTAIELGFHEIQDNQSETITEEELIGIIKKYNEDPLIHGILVQLPLPSHINEGKVLHAIDPNKDVDGFHPMNLGRLVIGGNAITFLPCTPAGIQELLIRSSVETLGAEVVVIGRSNIVGRPISIMLTQKGVGGDATVTLVHTKSKNIVRHCQQADIVIAAVGVPNFVKAEWIKPGATVIDVGVNRIGFNEDTGKPILSGDVDFVNVSQVAGKITPVPGGVGPMTIAMLMRNTVRSAFFHLSL</sequence>
<comment type="function">
    <text evidence="1">Catalyzes the oxidation of 5,10-methylenetetrahydrofolate to 5,10-methenyltetrahydrofolate and then the hydrolysis of 5,10-methenyltetrahydrofolate to 10-formyltetrahydrofolate.</text>
</comment>
<comment type="catalytic activity">
    <reaction evidence="1">
        <text>(6R)-5,10-methylene-5,6,7,8-tetrahydrofolate + NADP(+) = (6R)-5,10-methenyltetrahydrofolate + NADPH</text>
        <dbReference type="Rhea" id="RHEA:22812"/>
        <dbReference type="ChEBI" id="CHEBI:15636"/>
        <dbReference type="ChEBI" id="CHEBI:57455"/>
        <dbReference type="ChEBI" id="CHEBI:57783"/>
        <dbReference type="ChEBI" id="CHEBI:58349"/>
        <dbReference type="EC" id="1.5.1.5"/>
    </reaction>
</comment>
<comment type="catalytic activity">
    <reaction evidence="1">
        <text>(6R)-5,10-methenyltetrahydrofolate + H2O = (6R)-10-formyltetrahydrofolate + H(+)</text>
        <dbReference type="Rhea" id="RHEA:23700"/>
        <dbReference type="ChEBI" id="CHEBI:15377"/>
        <dbReference type="ChEBI" id="CHEBI:15378"/>
        <dbReference type="ChEBI" id="CHEBI:57455"/>
        <dbReference type="ChEBI" id="CHEBI:195366"/>
        <dbReference type="EC" id="3.5.4.9"/>
    </reaction>
</comment>
<comment type="pathway">
    <text evidence="1">One-carbon metabolism; tetrahydrofolate interconversion.</text>
</comment>
<comment type="subunit">
    <text evidence="1">Homodimer.</text>
</comment>
<comment type="similarity">
    <text evidence="1">Belongs to the tetrahydrofolate dehydrogenase/cyclohydrolase family.</text>
</comment>
<feature type="chain" id="PRO_0000268381" description="Bifunctional protein FolD">
    <location>
        <begin position="1"/>
        <end position="297"/>
    </location>
</feature>
<feature type="binding site" evidence="1">
    <location>
        <begin position="168"/>
        <end position="170"/>
    </location>
    <ligand>
        <name>NADP(+)</name>
        <dbReference type="ChEBI" id="CHEBI:58349"/>
    </ligand>
</feature>
<feature type="binding site" evidence="1">
    <location>
        <position position="197"/>
    </location>
    <ligand>
        <name>NADP(+)</name>
        <dbReference type="ChEBI" id="CHEBI:58349"/>
    </ligand>
</feature>
<feature type="binding site" evidence="1">
    <location>
        <position position="238"/>
    </location>
    <ligand>
        <name>NADP(+)</name>
        <dbReference type="ChEBI" id="CHEBI:58349"/>
    </ligand>
</feature>
<keyword id="KW-0028">Amino-acid biosynthesis</keyword>
<keyword id="KW-0368">Histidine biosynthesis</keyword>
<keyword id="KW-0378">Hydrolase</keyword>
<keyword id="KW-0486">Methionine biosynthesis</keyword>
<keyword id="KW-0511">Multifunctional enzyme</keyword>
<keyword id="KW-0521">NADP</keyword>
<keyword id="KW-0554">One-carbon metabolism</keyword>
<keyword id="KW-0560">Oxidoreductase</keyword>
<keyword id="KW-0658">Purine biosynthesis</keyword>
<keyword id="KW-1185">Reference proteome</keyword>
<dbReference type="EC" id="1.5.1.5" evidence="1"/>
<dbReference type="EC" id="3.5.4.9" evidence="1"/>
<dbReference type="EMBL" id="AM180252">
    <property type="protein sequence ID" value="CAJ54929.1"/>
    <property type="molecule type" value="Genomic_DNA"/>
</dbReference>
<dbReference type="RefSeq" id="WP_011526958.1">
    <property type="nucleotide sequence ID" value="NC_008011.1"/>
</dbReference>
<dbReference type="SMR" id="Q1MPZ8"/>
<dbReference type="STRING" id="363253.LI0875"/>
<dbReference type="KEGG" id="lip:LI0875"/>
<dbReference type="eggNOG" id="COG0190">
    <property type="taxonomic scope" value="Bacteria"/>
</dbReference>
<dbReference type="HOGENOM" id="CLU_034045_1_2_7"/>
<dbReference type="OrthoDB" id="9803580at2"/>
<dbReference type="UniPathway" id="UPA00193"/>
<dbReference type="Proteomes" id="UP000002430">
    <property type="component" value="Chromosome"/>
</dbReference>
<dbReference type="GO" id="GO:0005829">
    <property type="term" value="C:cytosol"/>
    <property type="evidence" value="ECO:0007669"/>
    <property type="project" value="TreeGrafter"/>
</dbReference>
<dbReference type="GO" id="GO:0004477">
    <property type="term" value="F:methenyltetrahydrofolate cyclohydrolase activity"/>
    <property type="evidence" value="ECO:0007669"/>
    <property type="project" value="UniProtKB-UniRule"/>
</dbReference>
<dbReference type="GO" id="GO:0004488">
    <property type="term" value="F:methylenetetrahydrofolate dehydrogenase (NADP+) activity"/>
    <property type="evidence" value="ECO:0007669"/>
    <property type="project" value="UniProtKB-UniRule"/>
</dbReference>
<dbReference type="GO" id="GO:0000105">
    <property type="term" value="P:L-histidine biosynthetic process"/>
    <property type="evidence" value="ECO:0007669"/>
    <property type="project" value="UniProtKB-KW"/>
</dbReference>
<dbReference type="GO" id="GO:0009086">
    <property type="term" value="P:methionine biosynthetic process"/>
    <property type="evidence" value="ECO:0007669"/>
    <property type="project" value="UniProtKB-KW"/>
</dbReference>
<dbReference type="GO" id="GO:0006164">
    <property type="term" value="P:purine nucleotide biosynthetic process"/>
    <property type="evidence" value="ECO:0007669"/>
    <property type="project" value="UniProtKB-KW"/>
</dbReference>
<dbReference type="GO" id="GO:0035999">
    <property type="term" value="P:tetrahydrofolate interconversion"/>
    <property type="evidence" value="ECO:0007669"/>
    <property type="project" value="UniProtKB-UniRule"/>
</dbReference>
<dbReference type="CDD" id="cd01080">
    <property type="entry name" value="NAD_bind_m-THF_DH_Cyclohyd"/>
    <property type="match status" value="1"/>
</dbReference>
<dbReference type="FunFam" id="3.40.50.720:FF:000189">
    <property type="entry name" value="Bifunctional protein FolD"/>
    <property type="match status" value="1"/>
</dbReference>
<dbReference type="FunFam" id="3.40.50.10860:FF:000005">
    <property type="entry name" value="C-1-tetrahydrofolate synthase, cytoplasmic, putative"/>
    <property type="match status" value="1"/>
</dbReference>
<dbReference type="Gene3D" id="3.40.50.10860">
    <property type="entry name" value="Leucine Dehydrogenase, chain A, domain 1"/>
    <property type="match status" value="1"/>
</dbReference>
<dbReference type="Gene3D" id="3.40.50.720">
    <property type="entry name" value="NAD(P)-binding Rossmann-like Domain"/>
    <property type="match status" value="1"/>
</dbReference>
<dbReference type="HAMAP" id="MF_01576">
    <property type="entry name" value="THF_DHG_CYH"/>
    <property type="match status" value="1"/>
</dbReference>
<dbReference type="InterPro" id="IPR046346">
    <property type="entry name" value="Aminoacid_DH-like_N_sf"/>
</dbReference>
<dbReference type="InterPro" id="IPR036291">
    <property type="entry name" value="NAD(P)-bd_dom_sf"/>
</dbReference>
<dbReference type="InterPro" id="IPR000672">
    <property type="entry name" value="THF_DH/CycHdrlase"/>
</dbReference>
<dbReference type="InterPro" id="IPR020630">
    <property type="entry name" value="THF_DH/CycHdrlase_cat_dom"/>
</dbReference>
<dbReference type="InterPro" id="IPR020867">
    <property type="entry name" value="THF_DH/CycHdrlase_CS"/>
</dbReference>
<dbReference type="InterPro" id="IPR020631">
    <property type="entry name" value="THF_DH/CycHdrlase_NAD-bd_dom"/>
</dbReference>
<dbReference type="NCBIfam" id="NF010765">
    <property type="entry name" value="PRK14168.1"/>
    <property type="match status" value="1"/>
</dbReference>
<dbReference type="PANTHER" id="PTHR48099:SF5">
    <property type="entry name" value="C-1-TETRAHYDROFOLATE SYNTHASE, CYTOPLASMIC"/>
    <property type="match status" value="1"/>
</dbReference>
<dbReference type="PANTHER" id="PTHR48099">
    <property type="entry name" value="C-1-TETRAHYDROFOLATE SYNTHASE, CYTOPLASMIC-RELATED"/>
    <property type="match status" value="1"/>
</dbReference>
<dbReference type="Pfam" id="PF00763">
    <property type="entry name" value="THF_DHG_CYH"/>
    <property type="match status" value="1"/>
</dbReference>
<dbReference type="Pfam" id="PF02882">
    <property type="entry name" value="THF_DHG_CYH_C"/>
    <property type="match status" value="1"/>
</dbReference>
<dbReference type="PRINTS" id="PR00085">
    <property type="entry name" value="THFDHDRGNASE"/>
</dbReference>
<dbReference type="SUPFAM" id="SSF53223">
    <property type="entry name" value="Aminoacid dehydrogenase-like, N-terminal domain"/>
    <property type="match status" value="1"/>
</dbReference>
<dbReference type="SUPFAM" id="SSF51735">
    <property type="entry name" value="NAD(P)-binding Rossmann-fold domains"/>
    <property type="match status" value="1"/>
</dbReference>
<dbReference type="PROSITE" id="PS00766">
    <property type="entry name" value="THF_DHG_CYH_1"/>
    <property type="match status" value="1"/>
</dbReference>
<dbReference type="PROSITE" id="PS00767">
    <property type="entry name" value="THF_DHG_CYH_2"/>
    <property type="match status" value="1"/>
</dbReference>
<gene>
    <name evidence="1" type="primary">folD</name>
    <name type="ordered locus">LI0875</name>
</gene>
<evidence type="ECO:0000255" key="1">
    <source>
        <dbReference type="HAMAP-Rule" id="MF_01576"/>
    </source>
</evidence>
<reference key="1">
    <citation type="submission" date="2005-11" db="EMBL/GenBank/DDBJ databases">
        <title>The complete genome sequence of Lawsonia intracellularis: the causative agent of proliferative enteropathy.</title>
        <authorList>
            <person name="Kaur K."/>
            <person name="Zhang Q."/>
            <person name="Beckler D."/>
            <person name="Munir S."/>
            <person name="Li L."/>
            <person name="Kinsley K."/>
            <person name="Herron L."/>
            <person name="Peterson A."/>
            <person name="May B."/>
            <person name="Singh S."/>
            <person name="Gebhart C."/>
            <person name="Kapur V."/>
        </authorList>
    </citation>
    <scope>NUCLEOTIDE SEQUENCE [LARGE SCALE GENOMIC DNA]</scope>
    <source>
        <strain>PHE/MN1-00</strain>
    </source>
</reference>
<proteinExistence type="inferred from homology"/>